<feature type="transit peptide" description="Chloroplast" evidence="1">
    <location>
        <begin position="1"/>
        <end position="51"/>
    </location>
</feature>
<feature type="chain" id="PRO_0000008834" description="Ferredoxin-1, chloroplastic">
    <location>
        <begin position="52"/>
        <end position="148"/>
    </location>
</feature>
<feature type="domain" description="2Fe-2S ferredoxin-type" evidence="2">
    <location>
        <begin position="54"/>
        <end position="144"/>
    </location>
</feature>
<feature type="binding site" evidence="2">
    <location>
        <position position="90"/>
    </location>
    <ligand>
        <name>[2Fe-2S] cluster</name>
        <dbReference type="ChEBI" id="CHEBI:190135"/>
    </ligand>
</feature>
<feature type="binding site" evidence="2">
    <location>
        <position position="95"/>
    </location>
    <ligand>
        <name>[2Fe-2S] cluster</name>
        <dbReference type="ChEBI" id="CHEBI:190135"/>
    </ligand>
</feature>
<feature type="binding site" evidence="2">
    <location>
        <position position="98"/>
    </location>
    <ligand>
        <name>[2Fe-2S] cluster</name>
        <dbReference type="ChEBI" id="CHEBI:190135"/>
    </ligand>
</feature>
<feature type="binding site" evidence="2">
    <location>
        <position position="128"/>
    </location>
    <ligand>
        <name>[2Fe-2S] cluster</name>
        <dbReference type="ChEBI" id="CHEBI:190135"/>
    </ligand>
</feature>
<keyword id="KW-0001">2Fe-2S</keyword>
<keyword id="KW-0150">Chloroplast</keyword>
<keyword id="KW-0249">Electron transport</keyword>
<keyword id="KW-0408">Iron</keyword>
<keyword id="KW-0411">Iron-sulfur</keyword>
<keyword id="KW-0479">Metal-binding</keyword>
<keyword id="KW-0934">Plastid</keyword>
<keyword id="KW-0809">Transit peptide</keyword>
<keyword id="KW-0813">Transport</keyword>
<evidence type="ECO:0000250" key="1"/>
<evidence type="ECO:0000255" key="2">
    <source>
        <dbReference type="PROSITE-ProRule" id="PRU00465"/>
    </source>
</evidence>
<evidence type="ECO:0000305" key="3"/>
<proteinExistence type="evidence at transcript level"/>
<organism>
    <name type="scientific">Mesembryanthemum crystallinum</name>
    <name type="common">Common ice plant</name>
    <name type="synonym">Cryophytum crystallinum</name>
    <dbReference type="NCBI Taxonomy" id="3544"/>
    <lineage>
        <taxon>Eukaryota</taxon>
        <taxon>Viridiplantae</taxon>
        <taxon>Streptophyta</taxon>
        <taxon>Embryophyta</taxon>
        <taxon>Tracheophyta</taxon>
        <taxon>Spermatophyta</taxon>
        <taxon>Magnoliopsida</taxon>
        <taxon>eudicotyledons</taxon>
        <taxon>Gunneridae</taxon>
        <taxon>Pentapetalae</taxon>
        <taxon>Caryophyllales</taxon>
        <taxon>Aizoaceae</taxon>
        <taxon>Mesembryanthemum</taxon>
        <taxon>Mesembryanthemum subgen. Cryophytum</taxon>
    </lineage>
</organism>
<comment type="function">
    <text>Ferredoxins are iron-sulfur proteins that transfer electrons in a wide variety of metabolic reactions.</text>
</comment>
<comment type="cofactor">
    <cofactor>
        <name>[2Fe-2S] cluster</name>
        <dbReference type="ChEBI" id="CHEBI:190135"/>
    </cofactor>
    <text>Binds 1 [2Fe-2S] cluster.</text>
</comment>
<comment type="subcellular location">
    <subcellularLocation>
        <location>Plastid</location>
        <location>Chloroplast</location>
    </subcellularLocation>
</comment>
<comment type="similarity">
    <text evidence="3">Belongs to the 2Fe2S plant-type ferredoxin family.</text>
</comment>
<name>FER1_MESCR</name>
<protein>
    <recommendedName>
        <fullName>Ferredoxin-1, chloroplastic</fullName>
    </recommendedName>
    <alternativeName>
        <fullName>Ferredoxin I</fullName>
    </alternativeName>
</protein>
<reference key="1">
    <citation type="submission" date="1997-06" db="EMBL/GenBank/DDBJ databases">
        <authorList>
            <person name="Michalowski C.B."/>
            <person name="Bohnert H.J."/>
        </authorList>
    </citation>
    <scope>NUCLEOTIDE SEQUENCE [MRNA]</scope>
</reference>
<accession>O04683</accession>
<dbReference type="EMBL" id="AF003125">
    <property type="protein sequence ID" value="AAB61593.1"/>
    <property type="molecule type" value="mRNA"/>
</dbReference>
<dbReference type="PIR" id="T12417">
    <property type="entry name" value="T12417"/>
</dbReference>
<dbReference type="SMR" id="O04683"/>
<dbReference type="GO" id="GO:0009570">
    <property type="term" value="C:chloroplast stroma"/>
    <property type="evidence" value="ECO:0007669"/>
    <property type="project" value="TreeGrafter"/>
</dbReference>
<dbReference type="GO" id="GO:0051537">
    <property type="term" value="F:2 iron, 2 sulfur cluster binding"/>
    <property type="evidence" value="ECO:0007669"/>
    <property type="project" value="UniProtKB-KW"/>
</dbReference>
<dbReference type="GO" id="GO:0009055">
    <property type="term" value="F:electron transfer activity"/>
    <property type="evidence" value="ECO:0007669"/>
    <property type="project" value="InterPro"/>
</dbReference>
<dbReference type="GO" id="GO:0046872">
    <property type="term" value="F:metal ion binding"/>
    <property type="evidence" value="ECO:0007669"/>
    <property type="project" value="UniProtKB-KW"/>
</dbReference>
<dbReference type="GO" id="GO:0022900">
    <property type="term" value="P:electron transport chain"/>
    <property type="evidence" value="ECO:0007669"/>
    <property type="project" value="InterPro"/>
</dbReference>
<dbReference type="CDD" id="cd00207">
    <property type="entry name" value="fer2"/>
    <property type="match status" value="1"/>
</dbReference>
<dbReference type="FunFam" id="3.10.20.30:FF:000014">
    <property type="entry name" value="Ferredoxin"/>
    <property type="match status" value="1"/>
</dbReference>
<dbReference type="Gene3D" id="3.10.20.30">
    <property type="match status" value="1"/>
</dbReference>
<dbReference type="InterPro" id="IPR036010">
    <property type="entry name" value="2Fe-2S_ferredoxin-like_sf"/>
</dbReference>
<dbReference type="InterPro" id="IPR001041">
    <property type="entry name" value="2Fe-2S_ferredoxin-type"/>
</dbReference>
<dbReference type="InterPro" id="IPR006058">
    <property type="entry name" value="2Fe2S_fd_BS"/>
</dbReference>
<dbReference type="InterPro" id="IPR012675">
    <property type="entry name" value="Beta-grasp_dom_sf"/>
</dbReference>
<dbReference type="InterPro" id="IPR010241">
    <property type="entry name" value="Fd_pln"/>
</dbReference>
<dbReference type="NCBIfam" id="TIGR02008">
    <property type="entry name" value="fdx_plant"/>
    <property type="match status" value="1"/>
</dbReference>
<dbReference type="PANTHER" id="PTHR43112">
    <property type="entry name" value="FERREDOXIN"/>
    <property type="match status" value="1"/>
</dbReference>
<dbReference type="PANTHER" id="PTHR43112:SF3">
    <property type="entry name" value="FERREDOXIN-2, CHLOROPLASTIC"/>
    <property type="match status" value="1"/>
</dbReference>
<dbReference type="Pfam" id="PF00111">
    <property type="entry name" value="Fer2"/>
    <property type="match status" value="1"/>
</dbReference>
<dbReference type="SUPFAM" id="SSF54292">
    <property type="entry name" value="2Fe-2S ferredoxin-like"/>
    <property type="match status" value="1"/>
</dbReference>
<dbReference type="PROSITE" id="PS00197">
    <property type="entry name" value="2FE2S_FER_1"/>
    <property type="match status" value="1"/>
</dbReference>
<dbReference type="PROSITE" id="PS51085">
    <property type="entry name" value="2FE2S_FER_2"/>
    <property type="match status" value="1"/>
</dbReference>
<sequence length="148" mass="15358">MAATTAALSGATMSTAFAPKTPPMTAALPTNVGRALFGLKSSASRGRVTAMAAYKVTLVTPEGKQELECPDDVYILDAAEEAGIDLPYSCRAGSCSSCAGKVTSGSVNQDDGSFLDDDQIKEGWVLTCVAYPTGDVTIETHKEEELTA</sequence>